<gene>
    <name evidence="1" type="primary">CVC1</name>
    <name type="ordered locus">UL93</name>
</gene>
<sequence length="594" mass="68463">METHLYSDLAFEARFADDEQLPLHLVLDQEVLSNEEAETLRYVYYRNVDSAGRSTGRAPGGDEDDAPASDDAEDAVGGDRAFDRERRTWQRACFRVLPRPLELLDYLRQSGLTVTLEKEQRVRMFYAVFTTLGLRCPDNRLSGAQTLHLRLVWPDGSYRDWEFLARDLLREEMEANKRDRQHQLATTTNHRRRGGLRNNLDNGSDRRLPEAAVASLETAVSTPFFEIPNGAGTSSANGDGRFSNLEQRVARLLRGDEEFIYHAGPLEPPSKIRGHELVQLRLDVNPDLMYATDPHDRDEVARTDEWKGAGVSRLREVWDVQHRVRLRVLWYVNSFWRSRELSYDDHEVELYRALDAYRARIAVEYVLIRAVRDEIYAVLRRDGGALPQRFACHVSRNMSWRVVWELCRHALALWMDWADVRSCIIKALTPRLSRGAAAAAQRARRQRERSAPKPQELLFGPRNESGPPAEQTWYADVVRCVRAQVDLGVEVRAARCPRTGLWIVRDRRGRLRRWLSQPEVCVLYVTPDLDFYWVLPGGFAVSSRVTLHGLAQRALRDRFQNFEAVLARGMHVEAGRQEPETPRVSGRRLPFDDL</sequence>
<comment type="function">
    <text evidence="1">Capsid vertex-specific component that plays a role during viral DNA encapsidation, assuring correct genome cleavage and presumably stabilizing capsids that contain full-length viral genomes.</text>
</comment>
<comment type="subunit">
    <text evidence="1">Interacts (via C-terminus) with capsid vertex component 2/CVC2.</text>
</comment>
<comment type="subcellular location">
    <subcellularLocation>
        <location evidence="1">Virion</location>
    </subcellularLocation>
    <subcellularLocation>
        <location evidence="1">Host nucleus</location>
    </subcellularLocation>
</comment>
<comment type="similarity">
    <text evidence="1">Belongs to the herpesviridae CVC1 protein family.</text>
</comment>
<protein>
    <recommendedName>
        <fullName evidence="1">Capsid vertex component 1</fullName>
    </recommendedName>
</protein>
<dbReference type="EMBL" id="X17403">
    <property type="protein sequence ID" value="CAA35367.1"/>
    <property type="molecule type" value="Genomic_DNA"/>
</dbReference>
<dbReference type="EMBL" id="BK000394">
    <property type="protein sequence ID" value="DAA00190.1"/>
    <property type="molecule type" value="Genomic_DNA"/>
</dbReference>
<dbReference type="PIR" id="S09857">
    <property type="entry name" value="S09857"/>
</dbReference>
<dbReference type="PDB" id="7ET3">
    <property type="method" value="EM"/>
    <property type="resolution" value="4.20 A"/>
    <property type="chains" value="M=1-594"/>
</dbReference>
<dbReference type="PDB" id="8TEP">
    <property type="method" value="EM"/>
    <property type="resolution" value="3.50 A"/>
    <property type="chains" value="G=1-594"/>
</dbReference>
<dbReference type="PDB" id="8TES">
    <property type="method" value="EM"/>
    <property type="resolution" value="3.27 A"/>
    <property type="chains" value="G=1-594"/>
</dbReference>
<dbReference type="PDB" id="8TET">
    <property type="method" value="EM"/>
    <property type="resolution" value="4.26 A"/>
    <property type="chains" value="G=1-594"/>
</dbReference>
<dbReference type="PDB" id="8TEU">
    <property type="method" value="EM"/>
    <property type="resolution" value="4.01 A"/>
    <property type="chains" value="G=1-594"/>
</dbReference>
<dbReference type="PDB" id="8TEW">
    <property type="method" value="EM"/>
    <property type="resolution" value="3.02 A"/>
    <property type="chains" value="G=1-594"/>
</dbReference>
<dbReference type="PDBsum" id="7ET3"/>
<dbReference type="PDBsum" id="8TEP"/>
<dbReference type="PDBsum" id="8TES"/>
<dbReference type="PDBsum" id="8TET"/>
<dbReference type="PDBsum" id="8TEU"/>
<dbReference type="PDBsum" id="8TEW"/>
<dbReference type="EMDB" id="EMD-41194"/>
<dbReference type="EMDB" id="EMD-41200"/>
<dbReference type="EMDB" id="EMD-41201"/>
<dbReference type="EMDB" id="EMD-41202"/>
<dbReference type="EMDB" id="EMD-41204"/>
<dbReference type="SMR" id="P16799"/>
<dbReference type="Proteomes" id="UP000008991">
    <property type="component" value="Segment"/>
</dbReference>
<dbReference type="Proteomes" id="UP000008992">
    <property type="component" value="Segment"/>
</dbReference>
<dbReference type="GO" id="GO:0042025">
    <property type="term" value="C:host cell nucleus"/>
    <property type="evidence" value="ECO:0007669"/>
    <property type="project" value="UniProtKB-SubCell"/>
</dbReference>
<dbReference type="GO" id="GO:0019028">
    <property type="term" value="C:viral capsid"/>
    <property type="evidence" value="ECO:0007669"/>
    <property type="project" value="UniProtKB-KW"/>
</dbReference>
<dbReference type="GO" id="GO:0051276">
    <property type="term" value="P:chromosome organization"/>
    <property type="evidence" value="ECO:0007669"/>
    <property type="project" value="InterPro"/>
</dbReference>
<dbReference type="GO" id="GO:0019073">
    <property type="term" value="P:viral DNA genome packaging"/>
    <property type="evidence" value="ECO:0000315"/>
    <property type="project" value="CACAO"/>
</dbReference>
<dbReference type="HAMAP" id="MF_04017">
    <property type="entry name" value="HSV_CVC1"/>
    <property type="match status" value="1"/>
</dbReference>
<dbReference type="InterPro" id="IPR007640">
    <property type="entry name" value="UL17-like"/>
</dbReference>
<dbReference type="Pfam" id="PF04559">
    <property type="entry name" value="Herpes_UL17"/>
    <property type="match status" value="1"/>
</dbReference>
<proteinExistence type="evidence at protein level"/>
<organismHost>
    <name type="scientific">Homo sapiens</name>
    <name type="common">Human</name>
    <dbReference type="NCBI Taxonomy" id="9606"/>
</organismHost>
<accession>P16799</accession>
<accession>Q7M6J8</accession>
<keyword id="KW-0002">3D-structure</keyword>
<keyword id="KW-0167">Capsid protein</keyword>
<keyword id="KW-1048">Host nucleus</keyword>
<keyword id="KW-0426">Late protein</keyword>
<keyword id="KW-1185">Reference proteome</keyword>
<keyword id="KW-0231">Viral genome packaging</keyword>
<keyword id="KW-1188">Viral release from host cell</keyword>
<keyword id="KW-0946">Virion</keyword>
<reference key="1">
    <citation type="journal article" date="1990" name="Curr. Top. Microbiol. Immunol.">
        <title>Analysis of the protein-coding content of the sequence of human cytomegalovirus strain AD169.</title>
        <authorList>
            <person name="Chee M.S."/>
            <person name="Bankier A.T."/>
            <person name="Beck S."/>
            <person name="Bohni R."/>
            <person name="Brown C.M."/>
            <person name="Cerny R."/>
            <person name="Horsnell T."/>
            <person name="Hutchison C.A. III"/>
            <person name="Kouzarides T."/>
            <person name="Martignetti J.A."/>
            <person name="Preddie E."/>
            <person name="Satchwell S.C."/>
            <person name="Tomlinson P."/>
            <person name="Weston K.M."/>
            <person name="Barrell B.G."/>
        </authorList>
    </citation>
    <scope>NUCLEOTIDE SEQUENCE [LARGE SCALE GENOMIC DNA]</scope>
</reference>
<reference key="2">
    <citation type="journal article" date="2003" name="J. Gen. Virol.">
        <title>The human cytomegalovirus genome revisited: comparison with the chimpanzee cytomegalovirus genome.</title>
        <authorList>
            <person name="Davison A.J."/>
            <person name="Dolan A."/>
            <person name="Akter P."/>
            <person name="Addison C."/>
            <person name="Dargan D.J."/>
            <person name="Alcendor D.J."/>
            <person name="McGeoch D.J."/>
            <person name="Hayward G.S."/>
        </authorList>
    </citation>
    <scope>GENOME REANNOTATION</scope>
</reference>
<reference key="3">
    <citation type="journal article" date="2003" name="J. Gen. Virol.">
        <authorList>
            <person name="Davison A.J."/>
            <person name="Dolan A."/>
            <person name="Akter P."/>
            <person name="Addison C."/>
            <person name="Dargan D.J."/>
            <person name="Alcendor D.J."/>
            <person name="McGeoch D.J."/>
            <person name="Hayward G.S."/>
        </authorList>
    </citation>
    <scope>ERRATUM OF PUBMED:12533697</scope>
</reference>
<reference key="4">
    <citation type="journal article" date="2004" name="J. Virol.">
        <title>Identification of proteins in human cytomegalovirus (HCMV) particles: the HCMV proteome.</title>
        <authorList>
            <person name="Varnum S.M."/>
            <person name="Streblow D.N."/>
            <person name="Monroe M.E."/>
            <person name="Smith P."/>
            <person name="Auberry K.J."/>
            <person name="Pasa-Tolic L."/>
            <person name="Wang D."/>
            <person name="Camp D.G. II"/>
            <person name="Rodland K."/>
            <person name="Wiley S."/>
            <person name="Britt W."/>
            <person name="Shenk T."/>
            <person name="Smith R.D."/>
            <person name="Nelson J.A."/>
        </authorList>
    </citation>
    <scope>IDENTIFICATION</scope>
</reference>
<reference key="5">
    <citation type="journal article" date="2004" name="J. Virol.">
        <authorList>
            <person name="Varnum S.M."/>
            <person name="Streblow D.N."/>
            <person name="Monroe M.E."/>
            <person name="Smith P."/>
            <person name="Auberry K.J."/>
            <person name="Pasa-Tolic L."/>
            <person name="Wang D."/>
            <person name="Camp D.G. II"/>
            <person name="Rodland K."/>
            <person name="Wiley S."/>
            <person name="Britt W."/>
            <person name="Shenk T."/>
            <person name="Smith R.D."/>
            <person name="Nelson J.A."/>
        </authorList>
    </citation>
    <scope>ERRATUM OF PUBMED:15452216</scope>
</reference>
<evidence type="ECO:0000255" key="1">
    <source>
        <dbReference type="HAMAP-Rule" id="MF_04017"/>
    </source>
</evidence>
<evidence type="ECO:0000256" key="2">
    <source>
        <dbReference type="SAM" id="MobiDB-lite"/>
    </source>
</evidence>
<evidence type="ECO:0007829" key="3">
    <source>
        <dbReference type="PDB" id="8TES"/>
    </source>
</evidence>
<organism>
    <name type="scientific">Human cytomegalovirus (strain AD169)</name>
    <name type="common">HHV-5</name>
    <name type="synonym">Human herpesvirus 5</name>
    <dbReference type="NCBI Taxonomy" id="10360"/>
    <lineage>
        <taxon>Viruses</taxon>
        <taxon>Duplodnaviria</taxon>
        <taxon>Heunggongvirae</taxon>
        <taxon>Peploviricota</taxon>
        <taxon>Herviviricetes</taxon>
        <taxon>Herpesvirales</taxon>
        <taxon>Orthoherpesviridae</taxon>
        <taxon>Betaherpesvirinae</taxon>
        <taxon>Cytomegalovirus</taxon>
        <taxon>Cytomegalovirus humanbeta5</taxon>
        <taxon>Human cytomegalovirus</taxon>
    </lineage>
</organism>
<feature type="chain" id="PRO_0000115965" description="Capsid vertex component 1">
    <location>
        <begin position="1"/>
        <end position="594"/>
    </location>
</feature>
<feature type="region of interest" description="Disordered" evidence="2">
    <location>
        <begin position="52"/>
        <end position="77"/>
    </location>
</feature>
<feature type="region of interest" description="Disordered" evidence="2">
    <location>
        <begin position="176"/>
        <end position="205"/>
    </location>
</feature>
<feature type="region of interest" description="Disordered" evidence="2">
    <location>
        <begin position="443"/>
        <end position="468"/>
    </location>
</feature>
<feature type="region of interest" description="Disordered" evidence="2">
    <location>
        <begin position="575"/>
        <end position="594"/>
    </location>
</feature>
<feature type="compositionally biased region" description="Acidic residues" evidence="2">
    <location>
        <begin position="61"/>
        <end position="76"/>
    </location>
</feature>
<feature type="helix" evidence="3">
    <location>
        <begin position="2"/>
        <end position="13"/>
    </location>
</feature>
<feature type="helix" evidence="3">
    <location>
        <begin position="15"/>
        <end position="18"/>
    </location>
</feature>
<feature type="strand" evidence="3">
    <location>
        <begin position="20"/>
        <end position="27"/>
    </location>
</feature>
<feature type="turn" evidence="3">
    <location>
        <begin position="29"/>
        <end position="31"/>
    </location>
</feature>
<feature type="helix" evidence="3">
    <location>
        <begin position="34"/>
        <end position="38"/>
    </location>
</feature>
<feature type="strand" evidence="3">
    <location>
        <begin position="42"/>
        <end position="48"/>
    </location>
</feature>
<feature type="helix" evidence="3">
    <location>
        <begin position="63"/>
        <end position="65"/>
    </location>
</feature>
<feature type="turn" evidence="3">
    <location>
        <begin position="72"/>
        <end position="74"/>
    </location>
</feature>
<feature type="helix" evidence="3">
    <location>
        <begin position="75"/>
        <end position="77"/>
    </location>
</feature>
<feature type="helix" evidence="3">
    <location>
        <begin position="78"/>
        <end position="86"/>
    </location>
</feature>
<feature type="strand" evidence="3">
    <location>
        <begin position="90"/>
        <end position="92"/>
    </location>
</feature>
<feature type="strand" evidence="3">
    <location>
        <begin position="94"/>
        <end position="97"/>
    </location>
</feature>
<feature type="helix" evidence="3">
    <location>
        <begin position="103"/>
        <end position="109"/>
    </location>
</feature>
<feature type="strand" evidence="3">
    <location>
        <begin position="123"/>
        <end position="125"/>
    </location>
</feature>
<feature type="strand" evidence="3">
    <location>
        <begin position="127"/>
        <end position="135"/>
    </location>
</feature>
<feature type="strand" evidence="3">
    <location>
        <begin position="137"/>
        <end position="142"/>
    </location>
</feature>
<feature type="strand" evidence="3">
    <location>
        <begin position="146"/>
        <end position="152"/>
    </location>
</feature>
<feature type="strand" evidence="3">
    <location>
        <begin position="158"/>
        <end position="164"/>
    </location>
</feature>
<feature type="helix" evidence="3">
    <location>
        <begin position="165"/>
        <end position="169"/>
    </location>
</feature>
<feature type="turn" evidence="3">
    <location>
        <begin position="170"/>
        <end position="175"/>
    </location>
</feature>
<feature type="helix" evidence="3">
    <location>
        <begin position="302"/>
        <end position="309"/>
    </location>
</feature>
<feature type="strand" evidence="3">
    <location>
        <begin position="311"/>
        <end position="318"/>
    </location>
</feature>
<feature type="strand" evidence="3">
    <location>
        <begin position="325"/>
        <end position="334"/>
    </location>
</feature>
<feature type="helix" evidence="3">
    <location>
        <begin position="336"/>
        <end position="339"/>
    </location>
</feature>
<feature type="strand" evidence="3">
    <location>
        <begin position="342"/>
        <end position="344"/>
    </location>
</feature>
<feature type="helix" evidence="3">
    <location>
        <begin position="347"/>
        <end position="361"/>
    </location>
</feature>
<feature type="helix" evidence="3">
    <location>
        <begin position="363"/>
        <end position="382"/>
    </location>
</feature>
<feature type="strand" evidence="3">
    <location>
        <begin position="386"/>
        <end position="388"/>
    </location>
</feature>
<feature type="strand" evidence="3">
    <location>
        <begin position="396"/>
        <end position="398"/>
    </location>
</feature>
<feature type="helix" evidence="3">
    <location>
        <begin position="400"/>
        <end position="417"/>
    </location>
</feature>
<feature type="helix" evidence="3">
    <location>
        <begin position="423"/>
        <end position="432"/>
    </location>
</feature>
<feature type="helix" evidence="3">
    <location>
        <begin position="436"/>
        <end position="447"/>
    </location>
</feature>
<feature type="helix" evidence="3">
    <location>
        <begin position="454"/>
        <end position="459"/>
    </location>
</feature>
<feature type="strand" evidence="3">
    <location>
        <begin position="469"/>
        <end position="479"/>
    </location>
</feature>
<feature type="turn" evidence="3">
    <location>
        <begin position="480"/>
        <end position="483"/>
    </location>
</feature>
<feature type="strand" evidence="3">
    <location>
        <begin position="484"/>
        <end position="495"/>
    </location>
</feature>
<feature type="strand" evidence="3">
    <location>
        <begin position="497"/>
        <end position="499"/>
    </location>
</feature>
<feature type="strand" evidence="3">
    <location>
        <begin position="502"/>
        <end position="506"/>
    </location>
</feature>
<feature type="turn" evidence="3">
    <location>
        <begin position="507"/>
        <end position="509"/>
    </location>
</feature>
<feature type="strand" evidence="3">
    <location>
        <begin position="520"/>
        <end position="525"/>
    </location>
</feature>
<feature type="strand" evidence="3">
    <location>
        <begin position="529"/>
        <end position="534"/>
    </location>
</feature>
<feature type="strand" evidence="3">
    <location>
        <begin position="538"/>
        <end position="544"/>
    </location>
</feature>
<feature type="helix" evidence="3">
    <location>
        <begin position="552"/>
        <end position="559"/>
    </location>
</feature>
<feature type="strand" evidence="3">
    <location>
        <begin position="571"/>
        <end position="573"/>
    </location>
</feature>
<feature type="strand" evidence="3">
    <location>
        <begin position="586"/>
        <end position="588"/>
    </location>
</feature>
<name>CVC1_HCMVA</name>